<name>TU11_LOPAL</name>
<dbReference type="SMR" id="P0DKM9"/>
<dbReference type="GO" id="GO:0005576">
    <property type="term" value="C:extracellular region"/>
    <property type="evidence" value="ECO:0007669"/>
    <property type="project" value="UniProtKB-SubCell"/>
</dbReference>
<dbReference type="GO" id="GO:0099106">
    <property type="term" value="F:ion channel regulator activity"/>
    <property type="evidence" value="ECO:0007669"/>
    <property type="project" value="UniProtKB-KW"/>
</dbReference>
<dbReference type="GO" id="GO:0004867">
    <property type="term" value="F:serine-type endopeptidase inhibitor activity"/>
    <property type="evidence" value="ECO:0007669"/>
    <property type="project" value="UniProtKB-KW"/>
</dbReference>
<dbReference type="GO" id="GO:0090729">
    <property type="term" value="F:toxin activity"/>
    <property type="evidence" value="ECO:0007669"/>
    <property type="project" value="UniProtKB-KW"/>
</dbReference>
<dbReference type="GO" id="GO:0030154">
    <property type="term" value="P:cell differentiation"/>
    <property type="evidence" value="ECO:0007669"/>
    <property type="project" value="TreeGrafter"/>
</dbReference>
<dbReference type="CDD" id="cd00104">
    <property type="entry name" value="KAZAL_FS"/>
    <property type="match status" value="1"/>
</dbReference>
<dbReference type="FunFam" id="3.30.60.30:FF:000037">
    <property type="entry name" value="Ovomucoid"/>
    <property type="match status" value="1"/>
</dbReference>
<dbReference type="Gene3D" id="3.30.60.30">
    <property type="match status" value="1"/>
</dbReference>
<dbReference type="InterPro" id="IPR002350">
    <property type="entry name" value="Kazal_dom"/>
</dbReference>
<dbReference type="InterPro" id="IPR036058">
    <property type="entry name" value="Kazal_dom_sf"/>
</dbReference>
<dbReference type="InterPro" id="IPR001239">
    <property type="entry name" value="Prot_inh_Kazal-m"/>
</dbReference>
<dbReference type="InterPro" id="IPR050653">
    <property type="entry name" value="Prot_Inhib_GrowthFact_Antg"/>
</dbReference>
<dbReference type="PANTHER" id="PTHR10913:SF45">
    <property type="entry name" value="FOLLISTATIN, ISOFORM A-RELATED"/>
    <property type="match status" value="1"/>
</dbReference>
<dbReference type="PANTHER" id="PTHR10913">
    <property type="entry name" value="FOLLISTATIN-RELATED"/>
    <property type="match status" value="1"/>
</dbReference>
<dbReference type="Pfam" id="PF07648">
    <property type="entry name" value="Kazal_2"/>
    <property type="match status" value="1"/>
</dbReference>
<dbReference type="PRINTS" id="PR00290">
    <property type="entry name" value="KAZALINHBTR"/>
</dbReference>
<dbReference type="SMART" id="SM00280">
    <property type="entry name" value="KAZAL"/>
    <property type="match status" value="1"/>
</dbReference>
<dbReference type="SUPFAM" id="SSF100895">
    <property type="entry name" value="Kazal-type serine protease inhibitors"/>
    <property type="match status" value="1"/>
</dbReference>
<dbReference type="PROSITE" id="PS51465">
    <property type="entry name" value="KAZAL_2"/>
    <property type="match status" value="1"/>
</dbReference>
<keyword id="KW-1015">Disulfide bond</keyword>
<keyword id="KW-0872">Ion channel impairing toxin</keyword>
<keyword id="KW-0528">Neurotoxin</keyword>
<keyword id="KW-0646">Protease inhibitor</keyword>
<keyword id="KW-0964">Secreted</keyword>
<keyword id="KW-0722">Serine protease inhibitor</keyword>
<keyword id="KW-0800">Toxin</keyword>
<accession>P0DKM9</accession>
<evidence type="ECO:0000250" key="1"/>
<evidence type="ECO:0000255" key="2">
    <source>
        <dbReference type="PROSITE-ProRule" id="PRU00798"/>
    </source>
</evidence>
<evidence type="ECO:0000305" key="3"/>
<comment type="function">
    <text evidence="1">Acts as a neurotoxin by inhibiting an ion channel (By similarity). May also act as a serine protease inhibitor, since it possess the kazal serine protease inhibitor signature.</text>
</comment>
<comment type="subcellular location">
    <subcellularLocation>
        <location evidence="1">Secreted</location>
    </subcellularLocation>
</comment>
<comment type="tissue specificity">
    <text>Expressed by the venom duct.</text>
</comment>
<comment type="domain">
    <text>The cysteine framework is IX (C-C-C-C-C-C).</text>
</comment>
<comment type="similarity">
    <text evidence="3">Belongs to the conopeptide P-like superfamily.</text>
</comment>
<protein>
    <recommendedName>
        <fullName>Turripeptide OL11-like</fullName>
    </recommendedName>
</protein>
<feature type="chain" id="PRO_0000419843" description="Turripeptide OL11-like">
    <location>
        <begin position="1" status="less than"/>
        <end position="45"/>
    </location>
</feature>
<feature type="domain" description="Kazal-like" evidence="2">
    <location>
        <begin position="1" status="less than"/>
        <end position="45"/>
    </location>
</feature>
<feature type="site" description="Reactive bond" evidence="2">
    <location>
        <begin position="7"/>
        <end position="8"/>
    </location>
</feature>
<feature type="disulfide bond" evidence="2">
    <location>
        <begin position="1"/>
        <end position="31"/>
    </location>
</feature>
<feature type="disulfide bond" evidence="2">
    <location>
        <begin position="5"/>
        <end position="24"/>
    </location>
</feature>
<feature type="disulfide bond" evidence="2">
    <location>
        <begin position="13"/>
        <end position="45"/>
    </location>
</feature>
<feature type="non-terminal residue">
    <location>
        <position position="1"/>
    </location>
</feature>
<sequence>CMTICTMEYWPVCGSDGKTYPNKCHLTSTACTSQKDITVLHEGKC</sequence>
<reference key="1">
    <citation type="journal article" date="2006" name="J. Mol. Evol.">
        <title>Genes expressed in a turrid venom duct: divergence and similarity to conotoxins.</title>
        <authorList>
            <person name="Watkins M."/>
            <person name="Hillyard D.R."/>
            <person name="Olivera B.M."/>
        </authorList>
    </citation>
    <scope>NUCLEOTIDE SEQUENCE [MRNA]</scope>
    <source>
        <tissue>Venom duct</tissue>
    </source>
</reference>
<proteinExistence type="evidence at transcript level"/>
<organism>
    <name type="scientific">Lophiotoma albina</name>
    <name type="common">Sea snail</name>
    <name type="synonym">Xenuroturris albina</name>
    <dbReference type="NCBI Taxonomy" id="3245477"/>
    <lineage>
        <taxon>Eukaryota</taxon>
        <taxon>Metazoa</taxon>
        <taxon>Spiralia</taxon>
        <taxon>Lophotrochozoa</taxon>
        <taxon>Mollusca</taxon>
        <taxon>Gastropoda</taxon>
        <taxon>Caenogastropoda</taxon>
        <taxon>Neogastropoda</taxon>
        <taxon>Conoidea</taxon>
        <taxon>Turridae</taxon>
        <taxon>Gemmula</taxon>
    </lineage>
</organism>